<proteinExistence type="inferred from homology"/>
<evidence type="ECO:0000255" key="1">
    <source>
        <dbReference type="HAMAP-Rule" id="MF_00218"/>
    </source>
</evidence>
<accession>Q21H88</accession>
<gene>
    <name evidence="1" type="primary">hemE</name>
    <name type="ordered locus">Sde_2681</name>
</gene>
<dbReference type="EC" id="4.1.1.37" evidence="1"/>
<dbReference type="EMBL" id="CP000282">
    <property type="protein sequence ID" value="ABD81941.1"/>
    <property type="molecule type" value="Genomic_DNA"/>
</dbReference>
<dbReference type="RefSeq" id="WP_011469158.1">
    <property type="nucleotide sequence ID" value="NC_007912.1"/>
</dbReference>
<dbReference type="SMR" id="Q21H88"/>
<dbReference type="STRING" id="203122.Sde_2681"/>
<dbReference type="GeneID" id="98614339"/>
<dbReference type="KEGG" id="sde:Sde_2681"/>
<dbReference type="eggNOG" id="COG0407">
    <property type="taxonomic scope" value="Bacteria"/>
</dbReference>
<dbReference type="HOGENOM" id="CLU_040933_0_0_6"/>
<dbReference type="OrthoDB" id="9806656at2"/>
<dbReference type="UniPathway" id="UPA00251">
    <property type="reaction ID" value="UER00321"/>
</dbReference>
<dbReference type="Proteomes" id="UP000001947">
    <property type="component" value="Chromosome"/>
</dbReference>
<dbReference type="GO" id="GO:0005829">
    <property type="term" value="C:cytosol"/>
    <property type="evidence" value="ECO:0007669"/>
    <property type="project" value="TreeGrafter"/>
</dbReference>
<dbReference type="GO" id="GO:0004853">
    <property type="term" value="F:uroporphyrinogen decarboxylase activity"/>
    <property type="evidence" value="ECO:0007669"/>
    <property type="project" value="UniProtKB-UniRule"/>
</dbReference>
<dbReference type="GO" id="GO:0019353">
    <property type="term" value="P:protoporphyrinogen IX biosynthetic process from glutamate"/>
    <property type="evidence" value="ECO:0007669"/>
    <property type="project" value="TreeGrafter"/>
</dbReference>
<dbReference type="CDD" id="cd00717">
    <property type="entry name" value="URO-D"/>
    <property type="match status" value="1"/>
</dbReference>
<dbReference type="FunFam" id="3.20.20.210:FF:000001">
    <property type="entry name" value="Uroporphyrinogen decarboxylase"/>
    <property type="match status" value="1"/>
</dbReference>
<dbReference type="Gene3D" id="3.20.20.210">
    <property type="match status" value="1"/>
</dbReference>
<dbReference type="HAMAP" id="MF_00218">
    <property type="entry name" value="URO_D"/>
    <property type="match status" value="1"/>
</dbReference>
<dbReference type="InterPro" id="IPR038071">
    <property type="entry name" value="UROD/MetE-like_sf"/>
</dbReference>
<dbReference type="InterPro" id="IPR006361">
    <property type="entry name" value="Uroporphyrinogen_deCO2ase_HemE"/>
</dbReference>
<dbReference type="InterPro" id="IPR000257">
    <property type="entry name" value="Uroporphyrinogen_deCOase"/>
</dbReference>
<dbReference type="NCBIfam" id="TIGR01464">
    <property type="entry name" value="hemE"/>
    <property type="match status" value="1"/>
</dbReference>
<dbReference type="PANTHER" id="PTHR21091">
    <property type="entry name" value="METHYLTETRAHYDROFOLATE:HOMOCYSTEINE METHYLTRANSFERASE RELATED"/>
    <property type="match status" value="1"/>
</dbReference>
<dbReference type="PANTHER" id="PTHR21091:SF169">
    <property type="entry name" value="UROPORPHYRINOGEN DECARBOXYLASE"/>
    <property type="match status" value="1"/>
</dbReference>
<dbReference type="Pfam" id="PF01208">
    <property type="entry name" value="URO-D"/>
    <property type="match status" value="1"/>
</dbReference>
<dbReference type="SUPFAM" id="SSF51726">
    <property type="entry name" value="UROD/MetE-like"/>
    <property type="match status" value="1"/>
</dbReference>
<dbReference type="PROSITE" id="PS00906">
    <property type="entry name" value="UROD_1"/>
    <property type="match status" value="1"/>
</dbReference>
<dbReference type="PROSITE" id="PS00907">
    <property type="entry name" value="UROD_2"/>
    <property type="match status" value="1"/>
</dbReference>
<reference key="1">
    <citation type="journal article" date="2008" name="PLoS Genet.">
        <title>Complete genome sequence of the complex carbohydrate-degrading marine bacterium, Saccharophagus degradans strain 2-40 T.</title>
        <authorList>
            <person name="Weiner R.M."/>
            <person name="Taylor L.E. II"/>
            <person name="Henrissat B."/>
            <person name="Hauser L."/>
            <person name="Land M."/>
            <person name="Coutinho P.M."/>
            <person name="Rancurel C."/>
            <person name="Saunders E.H."/>
            <person name="Longmire A.G."/>
            <person name="Zhang H."/>
            <person name="Bayer E.A."/>
            <person name="Gilbert H.J."/>
            <person name="Larimer F."/>
            <person name="Zhulin I.B."/>
            <person name="Ekborg N.A."/>
            <person name="Lamed R."/>
            <person name="Richardson P.M."/>
            <person name="Borovok I."/>
            <person name="Hutcheson S."/>
        </authorList>
    </citation>
    <scope>NUCLEOTIDE SEQUENCE [LARGE SCALE GENOMIC DNA]</scope>
    <source>
        <strain>2-40 / ATCC 43961 / DSM 17024</strain>
    </source>
</reference>
<sequence length="354" mass="38650">MTVLKNDRFLRALMRQPVDQTPVWMMRQAGRYLPEYRATRAQAGDFMGLCTNPERACEVTLQPLERYPLDAAILFSDILTIPDAMGLGLYFETGEGPKFKKTISTAADIEKLEVIKPLQDLPYVMDAVSTIRRELNGRVPLIGFSGSPWTLATYMVEGGSSKDFQKTKALIYNHPEAAAQLMDKLADSVIAYLNAQIDAGAQAVQIFDSWGGALSHDAYKTFSLAPMAKIVKGLKRENEGRKVPVILFTKGGGQWLEAMADAGADCLGLDWTTDIGQARARVGDKVALQGNMDPSILYASPDRIREEVARILASYGAGTGHVFNLGHGITPGVDPEHAGAFIRAVGELSAQYHK</sequence>
<feature type="chain" id="PRO_1000023963" description="Uroporphyrinogen decarboxylase">
    <location>
        <begin position="1"/>
        <end position="354"/>
    </location>
</feature>
<feature type="binding site" evidence="1">
    <location>
        <begin position="27"/>
        <end position="31"/>
    </location>
    <ligand>
        <name>substrate</name>
    </ligand>
</feature>
<feature type="binding site" evidence="1">
    <location>
        <position position="77"/>
    </location>
    <ligand>
        <name>substrate</name>
    </ligand>
</feature>
<feature type="binding site" evidence="1">
    <location>
        <position position="154"/>
    </location>
    <ligand>
        <name>substrate</name>
    </ligand>
</feature>
<feature type="binding site" evidence="1">
    <location>
        <position position="209"/>
    </location>
    <ligand>
        <name>substrate</name>
    </ligand>
</feature>
<feature type="binding site" evidence="1">
    <location>
        <position position="327"/>
    </location>
    <ligand>
        <name>substrate</name>
    </ligand>
</feature>
<feature type="site" description="Transition state stabilizer" evidence="1">
    <location>
        <position position="77"/>
    </location>
</feature>
<protein>
    <recommendedName>
        <fullName evidence="1">Uroporphyrinogen decarboxylase</fullName>
        <shortName evidence="1">UPD</shortName>
        <shortName evidence="1">URO-D</shortName>
        <ecNumber evidence="1">4.1.1.37</ecNumber>
    </recommendedName>
</protein>
<comment type="function">
    <text evidence="1">Catalyzes the decarboxylation of four acetate groups of uroporphyrinogen-III to yield coproporphyrinogen-III.</text>
</comment>
<comment type="catalytic activity">
    <reaction evidence="1">
        <text>uroporphyrinogen III + 4 H(+) = coproporphyrinogen III + 4 CO2</text>
        <dbReference type="Rhea" id="RHEA:19865"/>
        <dbReference type="ChEBI" id="CHEBI:15378"/>
        <dbReference type="ChEBI" id="CHEBI:16526"/>
        <dbReference type="ChEBI" id="CHEBI:57308"/>
        <dbReference type="ChEBI" id="CHEBI:57309"/>
        <dbReference type="EC" id="4.1.1.37"/>
    </reaction>
</comment>
<comment type="pathway">
    <text evidence="1">Porphyrin-containing compound metabolism; protoporphyrin-IX biosynthesis; coproporphyrinogen-III from 5-aminolevulinate: step 4/4.</text>
</comment>
<comment type="subunit">
    <text evidence="1">Homodimer.</text>
</comment>
<comment type="subcellular location">
    <subcellularLocation>
        <location evidence="1">Cytoplasm</location>
    </subcellularLocation>
</comment>
<comment type="similarity">
    <text evidence="1">Belongs to the uroporphyrinogen decarboxylase family.</text>
</comment>
<organism>
    <name type="scientific">Saccharophagus degradans (strain 2-40 / ATCC 43961 / DSM 17024)</name>
    <dbReference type="NCBI Taxonomy" id="203122"/>
    <lineage>
        <taxon>Bacteria</taxon>
        <taxon>Pseudomonadati</taxon>
        <taxon>Pseudomonadota</taxon>
        <taxon>Gammaproteobacteria</taxon>
        <taxon>Cellvibrionales</taxon>
        <taxon>Cellvibrionaceae</taxon>
        <taxon>Saccharophagus</taxon>
    </lineage>
</organism>
<name>DCUP_SACD2</name>
<keyword id="KW-0963">Cytoplasm</keyword>
<keyword id="KW-0210">Decarboxylase</keyword>
<keyword id="KW-0456">Lyase</keyword>
<keyword id="KW-0627">Porphyrin biosynthesis</keyword>
<keyword id="KW-1185">Reference proteome</keyword>